<keyword id="KW-0238">DNA-binding</keyword>
<keyword id="KW-0539">Nucleus</keyword>
<keyword id="KW-1185">Reference proteome</keyword>
<keyword id="KW-0804">Transcription</keyword>
<keyword id="KW-0805">Transcription regulation</keyword>
<keyword id="KW-0862">Zinc</keyword>
<protein>
    <recommendedName>
        <fullName evidence="6">Transcription factor pgmR</fullName>
    </recommendedName>
    <alternativeName>
        <fullName evidence="6">Pigmented naphthoquinones biosynthesis cluster protein R</fullName>
    </alternativeName>
</protein>
<name>PGMR_ASPTN</name>
<gene>
    <name evidence="5" type="primary">pgmR</name>
    <name type="ORF">ATEG_06205</name>
</gene>
<organism>
    <name type="scientific">Aspergillus terreus (strain NIH 2624 / FGSC A1156)</name>
    <dbReference type="NCBI Taxonomy" id="341663"/>
    <lineage>
        <taxon>Eukaryota</taxon>
        <taxon>Fungi</taxon>
        <taxon>Dikarya</taxon>
        <taxon>Ascomycota</taxon>
        <taxon>Pezizomycotina</taxon>
        <taxon>Eurotiomycetes</taxon>
        <taxon>Eurotiomycetidae</taxon>
        <taxon>Eurotiales</taxon>
        <taxon>Aspergillaceae</taxon>
        <taxon>Aspergillus</taxon>
        <taxon>Aspergillus subgen. Circumdati</taxon>
    </lineage>
</organism>
<sequence length="186" mass="19314">MADSTPVRMPRAPKLRASCDECGAAKLKCDRGHPSCGRCISLGLKCVYGVSRKAGKPRRDAQSATRPPPTPGDSGPPLDYNSFGPTSPPSSVGDGATLASGLLPGAADLSPLDWGPGSSSSYRAVVDLCSRYAKEPMRMDDTAMSSVWDGFLEPSLFATYGSPVQVARLAGGSVPFSAAPVRDLPI</sequence>
<feature type="chain" id="PRO_0000456005" description="Transcription factor pgmR">
    <location>
        <begin position="1"/>
        <end position="186"/>
    </location>
</feature>
<feature type="DNA-binding region" description="Zn(2)-C6 fungal-type" evidence="1">
    <location>
        <begin position="19"/>
        <end position="46"/>
    </location>
</feature>
<feature type="region of interest" description="Disordered" evidence="2">
    <location>
        <begin position="52"/>
        <end position="98"/>
    </location>
</feature>
<dbReference type="EMBL" id="CH476601">
    <property type="protein sequence ID" value="EAU33966.1"/>
    <property type="molecule type" value="Genomic_DNA"/>
</dbReference>
<dbReference type="RefSeq" id="XP_001215383.1">
    <property type="nucleotide sequence ID" value="XM_001215383.1"/>
</dbReference>
<dbReference type="SMR" id="Q0CJC9"/>
<dbReference type="STRING" id="341663.Q0CJC9"/>
<dbReference type="EnsemblFungi" id="EAU33966">
    <property type="protein sequence ID" value="EAU33966"/>
    <property type="gene ID" value="ATEG_06205"/>
</dbReference>
<dbReference type="GeneID" id="4321474"/>
<dbReference type="VEuPathDB" id="FungiDB:ATEG_06205"/>
<dbReference type="HOGENOM" id="CLU_1454103_0_0_1"/>
<dbReference type="OrthoDB" id="2740448at2759"/>
<dbReference type="Proteomes" id="UP000007963">
    <property type="component" value="Unassembled WGS sequence"/>
</dbReference>
<dbReference type="GO" id="GO:0005634">
    <property type="term" value="C:nucleus"/>
    <property type="evidence" value="ECO:0007669"/>
    <property type="project" value="UniProtKB-SubCell"/>
</dbReference>
<dbReference type="GO" id="GO:0003677">
    <property type="term" value="F:DNA binding"/>
    <property type="evidence" value="ECO:0007669"/>
    <property type="project" value="UniProtKB-KW"/>
</dbReference>
<dbReference type="GO" id="GO:0000981">
    <property type="term" value="F:DNA-binding transcription factor activity, RNA polymerase II-specific"/>
    <property type="evidence" value="ECO:0007669"/>
    <property type="project" value="InterPro"/>
</dbReference>
<dbReference type="GO" id="GO:0008270">
    <property type="term" value="F:zinc ion binding"/>
    <property type="evidence" value="ECO:0007669"/>
    <property type="project" value="InterPro"/>
</dbReference>
<dbReference type="GO" id="GO:0009893">
    <property type="term" value="P:positive regulation of metabolic process"/>
    <property type="evidence" value="ECO:0007669"/>
    <property type="project" value="UniProtKB-ARBA"/>
</dbReference>
<dbReference type="CDD" id="cd00067">
    <property type="entry name" value="GAL4"/>
    <property type="match status" value="1"/>
</dbReference>
<dbReference type="Gene3D" id="4.10.240.10">
    <property type="entry name" value="Zn(2)-C6 fungal-type DNA-binding domain"/>
    <property type="match status" value="1"/>
</dbReference>
<dbReference type="InterPro" id="IPR050675">
    <property type="entry name" value="OAF3"/>
</dbReference>
<dbReference type="InterPro" id="IPR036864">
    <property type="entry name" value="Zn2-C6_fun-type_DNA-bd_sf"/>
</dbReference>
<dbReference type="InterPro" id="IPR001138">
    <property type="entry name" value="Zn2Cys6_DnaBD"/>
</dbReference>
<dbReference type="PANTHER" id="PTHR31069:SF31">
    <property type="entry name" value="MONODICTYPHENONE CLUSTER TRANSCRIPTION FACTOR-RELATED"/>
    <property type="match status" value="1"/>
</dbReference>
<dbReference type="PANTHER" id="PTHR31069">
    <property type="entry name" value="OLEATE-ACTIVATED TRANSCRIPTION FACTOR 1-RELATED"/>
    <property type="match status" value="1"/>
</dbReference>
<dbReference type="Pfam" id="PF00172">
    <property type="entry name" value="Zn_clus"/>
    <property type="match status" value="1"/>
</dbReference>
<dbReference type="PRINTS" id="PR00755">
    <property type="entry name" value="AFLATOXINBRP"/>
</dbReference>
<dbReference type="SMART" id="SM00066">
    <property type="entry name" value="GAL4"/>
    <property type="match status" value="1"/>
</dbReference>
<dbReference type="SUPFAM" id="SSF57701">
    <property type="entry name" value="Zn2/Cys6 DNA-binding domain"/>
    <property type="match status" value="1"/>
</dbReference>
<dbReference type="PROSITE" id="PS50048">
    <property type="entry name" value="ZN2_CY6_FUNGAL_2"/>
    <property type="match status" value="1"/>
</dbReference>
<evidence type="ECO:0000255" key="1">
    <source>
        <dbReference type="PROSITE-ProRule" id="PRU00227"/>
    </source>
</evidence>
<evidence type="ECO:0000256" key="2">
    <source>
        <dbReference type="SAM" id="MobiDB-lite"/>
    </source>
</evidence>
<evidence type="ECO:0000269" key="3">
    <source>
    </source>
</evidence>
<evidence type="ECO:0000269" key="4">
    <source>
    </source>
</evidence>
<evidence type="ECO:0000303" key="5">
    <source>
    </source>
</evidence>
<evidence type="ECO:0000303" key="6">
    <source>
    </source>
</evidence>
<comment type="function">
    <text evidence="3 4">Transcription factor that specifically regulates the expression of the pgm gene cluster that mediates the biosynthesis of cryptic naphthoquinones derived pigments responsible for the coloration of the fruiting bodies.</text>
</comment>
<comment type="subcellular location">
    <subcellularLocation>
        <location evidence="1">Nucleus</location>
    </subcellularLocation>
</comment>
<proteinExistence type="evidence at transcript level"/>
<accession>Q0CJC9</accession>
<reference key="1">
    <citation type="submission" date="2005-09" db="EMBL/GenBank/DDBJ databases">
        <title>Annotation of the Aspergillus terreus NIH2624 genome.</title>
        <authorList>
            <person name="Birren B.W."/>
            <person name="Lander E.S."/>
            <person name="Galagan J.E."/>
            <person name="Nusbaum C."/>
            <person name="Devon K."/>
            <person name="Henn M."/>
            <person name="Ma L.-J."/>
            <person name="Jaffe D.B."/>
            <person name="Butler J."/>
            <person name="Alvarez P."/>
            <person name="Gnerre S."/>
            <person name="Grabherr M."/>
            <person name="Kleber M."/>
            <person name="Mauceli E.W."/>
            <person name="Brockman W."/>
            <person name="Rounsley S."/>
            <person name="Young S.K."/>
            <person name="LaButti K."/>
            <person name="Pushparaj V."/>
            <person name="DeCaprio D."/>
            <person name="Crawford M."/>
            <person name="Koehrsen M."/>
            <person name="Engels R."/>
            <person name="Montgomery P."/>
            <person name="Pearson M."/>
            <person name="Howarth C."/>
            <person name="Larson L."/>
            <person name="Luoma S."/>
            <person name="White J."/>
            <person name="Alvarado L."/>
            <person name="Kodira C.D."/>
            <person name="Zeng Q."/>
            <person name="Oleary S."/>
            <person name="Yandava C."/>
            <person name="Denning D.W."/>
            <person name="Nierman W.C."/>
            <person name="Milne T."/>
            <person name="Madden K."/>
        </authorList>
    </citation>
    <scope>NUCLEOTIDE SEQUENCE [LARGE SCALE GENOMIC DNA]</scope>
    <source>
        <strain>NIH 2624 / FGSC A1156</strain>
    </source>
</reference>
<reference key="2">
    <citation type="journal article" date="2017" name="Microorganisms">
        <title>Melanisation of Aspergillus terreus-is butyrolactone I involved in the regulation of both DOPA and DHN types of pigments in submerged culture?</title>
        <authorList>
            <person name="Palonen E.K."/>
            <person name="Raina S."/>
            <person name="Brandt A."/>
            <person name="Meriluoto J."/>
            <person name="Keshavarz T."/>
            <person name="Soini J.T."/>
        </authorList>
    </citation>
    <scope>IDENTIFICATION</scope>
    <scope>FUNCTION</scope>
    <source>
        <strain>MUCL38669</strain>
    </source>
</reference>
<reference key="3">
    <citation type="journal article" date="2022" name="Fungal Genet. Biol.">
        <title>Identification of a polyketide biosynthesis gene cluster by transcriptional regulator activation in Aspergillus terreus.</title>
        <authorList>
            <person name="Tang S."/>
            <person name="Men P."/>
            <person name="Zhang W."/>
            <person name="Li H."/>
            <person name="Li Z."/>
            <person name="Huang X."/>
            <person name="Lu X."/>
        </authorList>
    </citation>
    <scope>FUNCTION</scope>
    <scope>INDUCTION</scope>
</reference>